<evidence type="ECO:0000255" key="1">
    <source>
        <dbReference type="HAMAP-Rule" id="MF_00176"/>
    </source>
</evidence>
<protein>
    <recommendedName>
        <fullName evidence="1">Serine--tRNA ligase</fullName>
        <ecNumber evidence="1">6.1.1.11</ecNumber>
    </recommendedName>
    <alternativeName>
        <fullName evidence="1">Seryl-tRNA synthetase</fullName>
        <shortName evidence="1">SerRS</shortName>
    </alternativeName>
    <alternativeName>
        <fullName evidence="1">Seryl-tRNA(Ser/Sec) synthetase</fullName>
    </alternativeName>
</protein>
<keyword id="KW-0030">Aminoacyl-tRNA synthetase</keyword>
<keyword id="KW-0067">ATP-binding</keyword>
<keyword id="KW-0963">Cytoplasm</keyword>
<keyword id="KW-0436">Ligase</keyword>
<keyword id="KW-0547">Nucleotide-binding</keyword>
<keyword id="KW-0648">Protein biosynthesis</keyword>
<keyword id="KW-1185">Reference proteome</keyword>
<proteinExistence type="inferred from homology"/>
<organism>
    <name type="scientific">Leuconostoc mesenteroides subsp. mesenteroides (strain ATCC 8293 / DSM 20343 / BCRC 11652 / CCM 1803 / JCM 6124 / NCDO 523 / NBRC 100496 / NCIMB 8023 / NCTC 12954 / NRRL B-1118 / 37Y)</name>
    <dbReference type="NCBI Taxonomy" id="203120"/>
    <lineage>
        <taxon>Bacteria</taxon>
        <taxon>Bacillati</taxon>
        <taxon>Bacillota</taxon>
        <taxon>Bacilli</taxon>
        <taxon>Lactobacillales</taxon>
        <taxon>Lactobacillaceae</taxon>
        <taxon>Leuconostoc</taxon>
    </lineage>
</organism>
<accession>Q03ZQ9</accession>
<gene>
    <name evidence="1" type="primary">serS</name>
    <name type="ordered locus">LEUM_0182</name>
</gene>
<name>SYS_LEUMM</name>
<reference key="1">
    <citation type="journal article" date="2006" name="Proc. Natl. Acad. Sci. U.S.A.">
        <title>Comparative genomics of the lactic acid bacteria.</title>
        <authorList>
            <person name="Makarova K.S."/>
            <person name="Slesarev A."/>
            <person name="Wolf Y.I."/>
            <person name="Sorokin A."/>
            <person name="Mirkin B."/>
            <person name="Koonin E.V."/>
            <person name="Pavlov A."/>
            <person name="Pavlova N."/>
            <person name="Karamychev V."/>
            <person name="Polouchine N."/>
            <person name="Shakhova V."/>
            <person name="Grigoriev I."/>
            <person name="Lou Y."/>
            <person name="Rohksar D."/>
            <person name="Lucas S."/>
            <person name="Huang K."/>
            <person name="Goodstein D.M."/>
            <person name="Hawkins T."/>
            <person name="Plengvidhya V."/>
            <person name="Welker D."/>
            <person name="Hughes J."/>
            <person name="Goh Y."/>
            <person name="Benson A."/>
            <person name="Baldwin K."/>
            <person name="Lee J.-H."/>
            <person name="Diaz-Muniz I."/>
            <person name="Dosti B."/>
            <person name="Smeianov V."/>
            <person name="Wechter W."/>
            <person name="Barabote R."/>
            <person name="Lorca G."/>
            <person name="Altermann E."/>
            <person name="Barrangou R."/>
            <person name="Ganesan B."/>
            <person name="Xie Y."/>
            <person name="Rawsthorne H."/>
            <person name="Tamir D."/>
            <person name="Parker C."/>
            <person name="Breidt F."/>
            <person name="Broadbent J.R."/>
            <person name="Hutkins R."/>
            <person name="O'Sullivan D."/>
            <person name="Steele J."/>
            <person name="Unlu G."/>
            <person name="Saier M.H. Jr."/>
            <person name="Klaenhammer T."/>
            <person name="Richardson P."/>
            <person name="Kozyavkin S."/>
            <person name="Weimer B.C."/>
            <person name="Mills D.A."/>
        </authorList>
    </citation>
    <scope>NUCLEOTIDE SEQUENCE [LARGE SCALE GENOMIC DNA]</scope>
    <source>
        <strain>ATCC 8293 / DSM 20343 / BCRC 11652 / CCM 1803 / JCM 6124 / NCDO 523 / NBRC 100496 / NCIMB 8023 / NCTC 12954 / NRRL B-1118 / 37Y</strain>
    </source>
</reference>
<comment type="function">
    <text evidence="1">Catalyzes the attachment of serine to tRNA(Ser). Is also able to aminoacylate tRNA(Sec) with serine, to form the misacylated tRNA L-seryl-tRNA(Sec), which will be further converted into selenocysteinyl-tRNA(Sec).</text>
</comment>
<comment type="catalytic activity">
    <reaction evidence="1">
        <text>tRNA(Ser) + L-serine + ATP = L-seryl-tRNA(Ser) + AMP + diphosphate + H(+)</text>
        <dbReference type="Rhea" id="RHEA:12292"/>
        <dbReference type="Rhea" id="RHEA-COMP:9669"/>
        <dbReference type="Rhea" id="RHEA-COMP:9703"/>
        <dbReference type="ChEBI" id="CHEBI:15378"/>
        <dbReference type="ChEBI" id="CHEBI:30616"/>
        <dbReference type="ChEBI" id="CHEBI:33019"/>
        <dbReference type="ChEBI" id="CHEBI:33384"/>
        <dbReference type="ChEBI" id="CHEBI:78442"/>
        <dbReference type="ChEBI" id="CHEBI:78533"/>
        <dbReference type="ChEBI" id="CHEBI:456215"/>
        <dbReference type="EC" id="6.1.1.11"/>
    </reaction>
</comment>
<comment type="catalytic activity">
    <reaction evidence="1">
        <text>tRNA(Sec) + L-serine + ATP = L-seryl-tRNA(Sec) + AMP + diphosphate + H(+)</text>
        <dbReference type="Rhea" id="RHEA:42580"/>
        <dbReference type="Rhea" id="RHEA-COMP:9742"/>
        <dbReference type="Rhea" id="RHEA-COMP:10128"/>
        <dbReference type="ChEBI" id="CHEBI:15378"/>
        <dbReference type="ChEBI" id="CHEBI:30616"/>
        <dbReference type="ChEBI" id="CHEBI:33019"/>
        <dbReference type="ChEBI" id="CHEBI:33384"/>
        <dbReference type="ChEBI" id="CHEBI:78442"/>
        <dbReference type="ChEBI" id="CHEBI:78533"/>
        <dbReference type="ChEBI" id="CHEBI:456215"/>
        <dbReference type="EC" id="6.1.1.11"/>
    </reaction>
</comment>
<comment type="pathway">
    <text evidence="1">Aminoacyl-tRNA biosynthesis; selenocysteinyl-tRNA(Sec) biosynthesis; L-seryl-tRNA(Sec) from L-serine and tRNA(Sec): step 1/1.</text>
</comment>
<comment type="subunit">
    <text evidence="1">Homodimer. The tRNA molecule binds across the dimer.</text>
</comment>
<comment type="subcellular location">
    <subcellularLocation>
        <location evidence="1">Cytoplasm</location>
    </subcellularLocation>
</comment>
<comment type="domain">
    <text evidence="1">Consists of two distinct domains, a catalytic core and a N-terminal extension that is involved in tRNA binding.</text>
</comment>
<comment type="similarity">
    <text evidence="1">Belongs to the class-II aminoacyl-tRNA synthetase family. Type-1 seryl-tRNA synthetase subfamily.</text>
</comment>
<sequence length="435" mass="49519">MLDIRYMRKNSAEVKQRLEYRGVNPETIDELLELDQKRRDLIQKVESLKAQRNDVSDKIAFAKRQKEDASEAILQMKQVGADIKSLDNEQTLLDEQVREIAAHLPNMAAFDVPVGPDESANVEQRKWAPEEYGSRPHALEEASWVKAHYEIGENLGILDFERGAKVSGARFLYYVGDGARLERAVYNFMLDEHRQEGYTEMITPIVVNDSAMFGTGQYPKFQDDAYRVEGLNQTYIPTAEVPLTNYYSGEELPSEDLPIKFTALSPSFRKEAGSAGKDTRGLIRLHQFNKVEMVKFTKPEDSYEELEKMTLDAENILQKLNLPYHVIVLSTGDMGFSAAKTYDIEVWMPQQNVYREISSVSNTEDFQARRMHITYRDADNKLQLVHTLNGSGLAVGRTVAAILENYQNEDGSVTIPEVLRPYLAGQEKLEPTTHH</sequence>
<feature type="chain" id="PRO_1000019719" description="Serine--tRNA ligase">
    <location>
        <begin position="1"/>
        <end position="435"/>
    </location>
</feature>
<feature type="binding site" evidence="1">
    <location>
        <begin position="238"/>
        <end position="240"/>
    </location>
    <ligand>
        <name>L-serine</name>
        <dbReference type="ChEBI" id="CHEBI:33384"/>
    </ligand>
</feature>
<feature type="binding site" evidence="1">
    <location>
        <begin position="269"/>
        <end position="271"/>
    </location>
    <ligand>
        <name>ATP</name>
        <dbReference type="ChEBI" id="CHEBI:30616"/>
    </ligand>
</feature>
<feature type="binding site" evidence="1">
    <location>
        <position position="292"/>
    </location>
    <ligand>
        <name>L-serine</name>
        <dbReference type="ChEBI" id="CHEBI:33384"/>
    </ligand>
</feature>
<feature type="binding site" evidence="1">
    <location>
        <begin position="356"/>
        <end position="359"/>
    </location>
    <ligand>
        <name>ATP</name>
        <dbReference type="ChEBI" id="CHEBI:30616"/>
    </ligand>
</feature>
<feature type="binding site" evidence="1">
    <location>
        <position position="391"/>
    </location>
    <ligand>
        <name>L-serine</name>
        <dbReference type="ChEBI" id="CHEBI:33384"/>
    </ligand>
</feature>
<dbReference type="EC" id="6.1.1.11" evidence="1"/>
<dbReference type="EMBL" id="CP000414">
    <property type="protein sequence ID" value="ABJ61313.1"/>
    <property type="molecule type" value="Genomic_DNA"/>
</dbReference>
<dbReference type="RefSeq" id="WP_011679121.1">
    <property type="nucleotide sequence ID" value="NC_008531.1"/>
</dbReference>
<dbReference type="SMR" id="Q03ZQ9"/>
<dbReference type="EnsemblBacteria" id="ABJ61313">
    <property type="protein sequence ID" value="ABJ61313"/>
    <property type="gene ID" value="LEUM_0182"/>
</dbReference>
<dbReference type="GeneID" id="29577644"/>
<dbReference type="KEGG" id="lme:LEUM_0182"/>
<dbReference type="eggNOG" id="COG0172">
    <property type="taxonomic scope" value="Bacteria"/>
</dbReference>
<dbReference type="HOGENOM" id="CLU_023797_1_1_9"/>
<dbReference type="UniPathway" id="UPA00906">
    <property type="reaction ID" value="UER00895"/>
</dbReference>
<dbReference type="Proteomes" id="UP000000362">
    <property type="component" value="Chromosome"/>
</dbReference>
<dbReference type="GO" id="GO:0005737">
    <property type="term" value="C:cytoplasm"/>
    <property type="evidence" value="ECO:0007669"/>
    <property type="project" value="UniProtKB-SubCell"/>
</dbReference>
<dbReference type="GO" id="GO:0005524">
    <property type="term" value="F:ATP binding"/>
    <property type="evidence" value="ECO:0007669"/>
    <property type="project" value="UniProtKB-UniRule"/>
</dbReference>
<dbReference type="GO" id="GO:0140096">
    <property type="term" value="F:catalytic activity, acting on a protein"/>
    <property type="evidence" value="ECO:0007669"/>
    <property type="project" value="UniProtKB-ARBA"/>
</dbReference>
<dbReference type="GO" id="GO:0004828">
    <property type="term" value="F:serine-tRNA ligase activity"/>
    <property type="evidence" value="ECO:0007669"/>
    <property type="project" value="UniProtKB-UniRule"/>
</dbReference>
<dbReference type="GO" id="GO:0016740">
    <property type="term" value="F:transferase activity"/>
    <property type="evidence" value="ECO:0007669"/>
    <property type="project" value="UniProtKB-ARBA"/>
</dbReference>
<dbReference type="GO" id="GO:0016260">
    <property type="term" value="P:selenocysteine biosynthetic process"/>
    <property type="evidence" value="ECO:0007669"/>
    <property type="project" value="UniProtKB-UniRule"/>
</dbReference>
<dbReference type="GO" id="GO:0006434">
    <property type="term" value="P:seryl-tRNA aminoacylation"/>
    <property type="evidence" value="ECO:0007669"/>
    <property type="project" value="UniProtKB-UniRule"/>
</dbReference>
<dbReference type="CDD" id="cd00770">
    <property type="entry name" value="SerRS_core"/>
    <property type="match status" value="1"/>
</dbReference>
<dbReference type="Gene3D" id="3.30.930.10">
    <property type="entry name" value="Bira Bifunctional Protein, Domain 2"/>
    <property type="match status" value="1"/>
</dbReference>
<dbReference type="Gene3D" id="1.10.287.40">
    <property type="entry name" value="Serine-tRNA synthetase, tRNA binding domain"/>
    <property type="match status" value="1"/>
</dbReference>
<dbReference type="HAMAP" id="MF_00176">
    <property type="entry name" value="Ser_tRNA_synth_type1"/>
    <property type="match status" value="1"/>
</dbReference>
<dbReference type="InterPro" id="IPR002314">
    <property type="entry name" value="aa-tRNA-synt_IIb"/>
</dbReference>
<dbReference type="InterPro" id="IPR006195">
    <property type="entry name" value="aa-tRNA-synth_II"/>
</dbReference>
<dbReference type="InterPro" id="IPR045864">
    <property type="entry name" value="aa-tRNA-synth_II/BPL/LPL"/>
</dbReference>
<dbReference type="InterPro" id="IPR002317">
    <property type="entry name" value="Ser-tRNA-ligase_type_1"/>
</dbReference>
<dbReference type="InterPro" id="IPR015866">
    <property type="entry name" value="Ser-tRNA-synth_1_N"/>
</dbReference>
<dbReference type="InterPro" id="IPR042103">
    <property type="entry name" value="SerRS_1_N_sf"/>
</dbReference>
<dbReference type="InterPro" id="IPR033729">
    <property type="entry name" value="SerRS_core"/>
</dbReference>
<dbReference type="InterPro" id="IPR010978">
    <property type="entry name" value="tRNA-bd_arm"/>
</dbReference>
<dbReference type="NCBIfam" id="TIGR00414">
    <property type="entry name" value="serS"/>
    <property type="match status" value="1"/>
</dbReference>
<dbReference type="PANTHER" id="PTHR43697:SF1">
    <property type="entry name" value="SERINE--TRNA LIGASE"/>
    <property type="match status" value="1"/>
</dbReference>
<dbReference type="PANTHER" id="PTHR43697">
    <property type="entry name" value="SERYL-TRNA SYNTHETASE"/>
    <property type="match status" value="1"/>
</dbReference>
<dbReference type="Pfam" id="PF02403">
    <property type="entry name" value="Seryl_tRNA_N"/>
    <property type="match status" value="1"/>
</dbReference>
<dbReference type="Pfam" id="PF00587">
    <property type="entry name" value="tRNA-synt_2b"/>
    <property type="match status" value="1"/>
</dbReference>
<dbReference type="PIRSF" id="PIRSF001529">
    <property type="entry name" value="Ser-tRNA-synth_IIa"/>
    <property type="match status" value="1"/>
</dbReference>
<dbReference type="PRINTS" id="PR00981">
    <property type="entry name" value="TRNASYNTHSER"/>
</dbReference>
<dbReference type="SUPFAM" id="SSF55681">
    <property type="entry name" value="Class II aaRS and biotin synthetases"/>
    <property type="match status" value="1"/>
</dbReference>
<dbReference type="SUPFAM" id="SSF46589">
    <property type="entry name" value="tRNA-binding arm"/>
    <property type="match status" value="1"/>
</dbReference>
<dbReference type="PROSITE" id="PS50862">
    <property type="entry name" value="AA_TRNA_LIGASE_II"/>
    <property type="match status" value="1"/>
</dbReference>